<organism>
    <name type="scientific">Zygosaccharomyces bailii</name>
    <dbReference type="NCBI Taxonomy" id="4954"/>
    <lineage>
        <taxon>Eukaryota</taxon>
        <taxon>Fungi</taxon>
        <taxon>Dikarya</taxon>
        <taxon>Ascomycota</taxon>
        <taxon>Saccharomycotina</taxon>
        <taxon>Saccharomycetes</taxon>
        <taxon>Saccharomycetales</taxon>
        <taxon>Saccharomycetaceae</taxon>
        <taxon>Zygosaccharomyces</taxon>
    </lineage>
</organism>
<feature type="chain" id="PRO_0000137589" description="Inorganic pyrophosphatase">
    <location>
        <begin position="1"/>
        <end position="287"/>
    </location>
</feature>
<feature type="binding site" evidence="1">
    <location>
        <position position="79"/>
    </location>
    <ligand>
        <name>diphosphate</name>
        <dbReference type="ChEBI" id="CHEBI:33019"/>
    </ligand>
</feature>
<feature type="binding site" evidence="1">
    <location>
        <position position="116"/>
    </location>
    <ligand>
        <name>Mg(2+)</name>
        <dbReference type="ChEBI" id="CHEBI:18420"/>
        <label>1</label>
    </ligand>
</feature>
<feature type="binding site" evidence="1">
    <location>
        <position position="121"/>
    </location>
    <ligand>
        <name>Mg(2+)</name>
        <dbReference type="ChEBI" id="CHEBI:18420"/>
        <label>1</label>
    </ligand>
</feature>
<feature type="binding site" evidence="1">
    <location>
        <position position="121"/>
    </location>
    <ligand>
        <name>Mg(2+)</name>
        <dbReference type="ChEBI" id="CHEBI:18420"/>
        <label>2</label>
    </ligand>
</feature>
<feature type="binding site" evidence="1">
    <location>
        <position position="153"/>
    </location>
    <ligand>
        <name>Mg(2+)</name>
        <dbReference type="ChEBI" id="CHEBI:18420"/>
        <label>1</label>
    </ligand>
</feature>
<gene>
    <name type="primary">IPP1</name>
</gene>
<comment type="catalytic activity">
    <reaction>
        <text>diphosphate + H2O = 2 phosphate + H(+)</text>
        <dbReference type="Rhea" id="RHEA:24576"/>
        <dbReference type="ChEBI" id="CHEBI:15377"/>
        <dbReference type="ChEBI" id="CHEBI:15378"/>
        <dbReference type="ChEBI" id="CHEBI:33019"/>
        <dbReference type="ChEBI" id="CHEBI:43474"/>
        <dbReference type="EC" id="3.6.1.1"/>
    </reaction>
</comment>
<comment type="cofactor">
    <cofactor evidence="1">
        <name>Mg(2+)</name>
        <dbReference type="ChEBI" id="CHEBI:18420"/>
    </cofactor>
</comment>
<comment type="subcellular location">
    <subcellularLocation>
        <location evidence="1">Cytoplasm</location>
    </subcellularLocation>
</comment>
<comment type="similarity">
    <text evidence="2">Belongs to the PPase family.</text>
</comment>
<proteinExistence type="inferred from homology"/>
<accession>Q9C0T9</accession>
<sequence>MTYTTRQIGAKNTLDYKLFIEKDGKPVSPFHDIPLYADEDKQIFNMVVEIPRWTNAKLEITKEENLNPIIQDTKKGKLRYVRNCFPHHGYIHNYGAFPQTWEDPNVVHPETKAVGDNDPVDVLEIGETIGYTGQVKQVKVLGIMALLDEGETDWKVIAIDVNDPLAPKLHDIEDVEKYFPGQLRATNEWFRIYKIPDGKPENQFAFSGEAKNKKYALDIIRETHESWKQLIHGQVSDSKGISLTNTTLTDTPTYSAAAASEVPSASPQPDAPVDKSVDKWFFISGSA</sequence>
<protein>
    <recommendedName>
        <fullName>Inorganic pyrophosphatase</fullName>
        <ecNumber>3.6.1.1</ecNumber>
    </recommendedName>
    <alternativeName>
        <fullName>Pyrophosphate phospho-hydrolase</fullName>
        <shortName>PPase</shortName>
    </alternativeName>
</protein>
<dbReference type="EC" id="3.6.1.1"/>
<dbReference type="EMBL" id="AJ309279">
    <property type="protein sequence ID" value="CAC37330.1"/>
    <property type="molecule type" value="Genomic_DNA"/>
</dbReference>
<dbReference type="SMR" id="Q9C0T9"/>
<dbReference type="GO" id="GO:0005737">
    <property type="term" value="C:cytoplasm"/>
    <property type="evidence" value="ECO:0007669"/>
    <property type="project" value="UniProtKB-SubCell"/>
</dbReference>
<dbReference type="GO" id="GO:0004427">
    <property type="term" value="F:inorganic diphosphate phosphatase activity"/>
    <property type="evidence" value="ECO:0007669"/>
    <property type="project" value="UniProtKB-EC"/>
</dbReference>
<dbReference type="GO" id="GO:0000287">
    <property type="term" value="F:magnesium ion binding"/>
    <property type="evidence" value="ECO:0007669"/>
    <property type="project" value="InterPro"/>
</dbReference>
<dbReference type="GO" id="GO:0006796">
    <property type="term" value="P:phosphate-containing compound metabolic process"/>
    <property type="evidence" value="ECO:0007669"/>
    <property type="project" value="InterPro"/>
</dbReference>
<dbReference type="CDD" id="cd00412">
    <property type="entry name" value="pyrophosphatase"/>
    <property type="match status" value="1"/>
</dbReference>
<dbReference type="FunFam" id="3.90.80.10:FF:000004">
    <property type="entry name" value="Inorganic pyrophosphatase"/>
    <property type="match status" value="1"/>
</dbReference>
<dbReference type="Gene3D" id="3.90.80.10">
    <property type="entry name" value="Inorganic pyrophosphatase"/>
    <property type="match status" value="1"/>
</dbReference>
<dbReference type="InterPro" id="IPR008162">
    <property type="entry name" value="Pyrophosphatase"/>
</dbReference>
<dbReference type="InterPro" id="IPR036649">
    <property type="entry name" value="Pyrophosphatase_sf"/>
</dbReference>
<dbReference type="PANTHER" id="PTHR10286">
    <property type="entry name" value="INORGANIC PYROPHOSPHATASE"/>
    <property type="match status" value="1"/>
</dbReference>
<dbReference type="Pfam" id="PF00719">
    <property type="entry name" value="Pyrophosphatase"/>
    <property type="match status" value="1"/>
</dbReference>
<dbReference type="SUPFAM" id="SSF50324">
    <property type="entry name" value="Inorganic pyrophosphatase"/>
    <property type="match status" value="1"/>
</dbReference>
<dbReference type="PROSITE" id="PS00387">
    <property type="entry name" value="PPASE"/>
    <property type="match status" value="1"/>
</dbReference>
<reference key="1">
    <citation type="submission" date="2001-04" db="EMBL/GenBank/DDBJ databases">
        <title>Sequence analyses of a Zygosaccharomyces bailii DNA fragment containing the Thr-tRNA, IPP1 and TRP1 genes.</title>
        <authorList>
            <person name="Rodrigues F.J."/>
            <person name="Steensma Y."/>
            <person name="Corte-Real M.S."/>
        </authorList>
    </citation>
    <scope>NUCLEOTIDE SEQUENCE [GENOMIC DNA]</scope>
    <source>
        <strain>ISA 1307</strain>
    </source>
</reference>
<keyword id="KW-0963">Cytoplasm</keyword>
<keyword id="KW-0378">Hydrolase</keyword>
<keyword id="KW-0460">Magnesium</keyword>
<keyword id="KW-0479">Metal-binding</keyword>
<name>IPYR_ZYGBA</name>
<evidence type="ECO:0000250" key="1"/>
<evidence type="ECO:0000305" key="2"/>